<feature type="chain" id="PRO_0000082353" description="Taste receptor type 2 member 60">
    <location>
        <begin position="1"/>
        <end position="318"/>
    </location>
</feature>
<feature type="topological domain" description="Extracellular" evidence="2">
    <location>
        <begin position="1"/>
        <end position="7"/>
    </location>
</feature>
<feature type="transmembrane region" description="Helical; Name=1" evidence="2">
    <location>
        <begin position="8"/>
        <end position="28"/>
    </location>
</feature>
<feature type="topological domain" description="Cytoplasmic" evidence="2">
    <location>
        <begin position="29"/>
        <end position="40"/>
    </location>
</feature>
<feature type="transmembrane region" description="Helical; Name=2" evidence="2">
    <location>
        <begin position="41"/>
        <end position="61"/>
    </location>
</feature>
<feature type="topological domain" description="Extracellular" evidence="2">
    <location>
        <begin position="62"/>
        <end position="88"/>
    </location>
</feature>
<feature type="transmembrane region" description="Helical; Name=3" evidence="2">
    <location>
        <begin position="89"/>
        <end position="109"/>
    </location>
</feature>
<feature type="topological domain" description="Cytoplasmic" evidence="2">
    <location>
        <begin position="110"/>
        <end position="128"/>
    </location>
</feature>
<feature type="transmembrane region" description="Helical; Name=4" evidence="2">
    <location>
        <begin position="129"/>
        <end position="149"/>
    </location>
</feature>
<feature type="topological domain" description="Extracellular" evidence="2">
    <location>
        <begin position="150"/>
        <end position="183"/>
    </location>
</feature>
<feature type="transmembrane region" description="Helical; Name=5" evidence="2">
    <location>
        <begin position="184"/>
        <end position="204"/>
    </location>
</feature>
<feature type="topological domain" description="Cytoplasmic" evidence="2">
    <location>
        <begin position="205"/>
        <end position="234"/>
    </location>
</feature>
<feature type="transmembrane region" description="Helical; Name=6" evidence="2">
    <location>
        <begin position="235"/>
        <end position="255"/>
    </location>
</feature>
<feature type="topological domain" description="Extracellular" evidence="2">
    <location>
        <begin position="256"/>
        <end position="264"/>
    </location>
</feature>
<feature type="transmembrane region" description="Helical; Name=7" evidence="2">
    <location>
        <begin position="265"/>
        <end position="285"/>
    </location>
</feature>
<feature type="topological domain" description="Cytoplasmic" evidence="2">
    <location>
        <begin position="286"/>
        <end position="318"/>
    </location>
</feature>
<feature type="glycosylation site" description="N-linked (GlcNAc...) asparagine" evidence="2">
    <location>
        <position position="179"/>
    </location>
</feature>
<organism>
    <name type="scientific">Pan paniscus</name>
    <name type="common">Pygmy chimpanzee</name>
    <name type="synonym">Bonobo</name>
    <dbReference type="NCBI Taxonomy" id="9597"/>
    <lineage>
        <taxon>Eukaryota</taxon>
        <taxon>Metazoa</taxon>
        <taxon>Chordata</taxon>
        <taxon>Craniata</taxon>
        <taxon>Vertebrata</taxon>
        <taxon>Euteleostomi</taxon>
        <taxon>Mammalia</taxon>
        <taxon>Eutheria</taxon>
        <taxon>Euarchontoglires</taxon>
        <taxon>Primates</taxon>
        <taxon>Haplorrhini</taxon>
        <taxon>Catarrhini</taxon>
        <taxon>Hominidae</taxon>
        <taxon>Pan</taxon>
    </lineage>
</organism>
<gene>
    <name type="primary">TAS2R60</name>
</gene>
<keyword id="KW-0297">G-protein coupled receptor</keyword>
<keyword id="KW-0325">Glycoprotein</keyword>
<keyword id="KW-0472">Membrane</keyword>
<keyword id="KW-0675">Receptor</keyword>
<keyword id="KW-1185">Reference proteome</keyword>
<keyword id="KW-0716">Sensory transduction</keyword>
<keyword id="KW-0919">Taste</keyword>
<keyword id="KW-0807">Transducer</keyword>
<keyword id="KW-0812">Transmembrane</keyword>
<keyword id="KW-1133">Transmembrane helix</keyword>
<comment type="function">
    <text evidence="1">Receptor that may play a role in the perception of bitterness and is gustducin-linked. May play a role in sensing the chemical composition of the gastrointestinal content. The activity of this receptor may stimulate alpha gustducin, mediate PLC-beta-2 activation and lead to the gating of TRPM5 (By similarity).</text>
</comment>
<comment type="subcellular location">
    <subcellularLocation>
        <location>Membrane</location>
        <topology>Multi-pass membrane protein</topology>
    </subcellularLocation>
</comment>
<comment type="miscellaneous">
    <text>Most taste cells may be activated by a limited number of bitter compounds; individual taste cells can discriminate among bitter stimuli.</text>
</comment>
<comment type="similarity">
    <text evidence="3">Belongs to the G-protein coupled receptor T2R family.</text>
</comment>
<sequence>MNGDHMVLGSSVTDKKAIILVTILLLLRLVAIAGNGFITAALGVEWVLRRMLLPCDKLLVSLGASHFCLQSVVMGKTIYVFLYPMAFPYNPVLQFLAFQWDFLNAATLWFSTWLSVFYCVKIATFTHPVFFWLKHKLSGWLPWMIFSYVGLSSFTTILFFIGNHRMYQNYLKNHLQPWNVTGNSIRSYCEKFYLFPLKMITWTMPTAVFFICMILLITSLGRHMKKALLTTSGFREPSVQAHIKALLALLSFAMLFISYFLSLVFSAAGIFPPLDFKFWVWESVIYLCAAVHPIILLFSNCRLRAVLKSRRSSRCGTP</sequence>
<reference key="1">
    <citation type="journal article" date="2005" name="Mol. Biol. Evol.">
        <title>Evolution of bitter taste receptors in humans and apes.</title>
        <authorList>
            <person name="Fischer A."/>
            <person name="Gilad Y."/>
            <person name="Man O."/>
            <person name="Paeaebo S."/>
        </authorList>
    </citation>
    <scope>NUCLEOTIDE SEQUENCE [GENOMIC DNA]</scope>
</reference>
<reference key="2">
    <citation type="journal article" date="2004" name="Proc. Natl. Acad. Sci. U.S.A.">
        <title>Divergence of T2R chemosensory receptor families in humans, bonobos, and chimpanzees.</title>
        <authorList>
            <person name="Parry C.M."/>
            <person name="Erkner A."/>
            <person name="le Coutre J."/>
        </authorList>
    </citation>
    <scope>NUCLEOTIDE SEQUENCE [GENOMIC DNA]</scope>
</reference>
<dbReference type="EMBL" id="AY724866">
    <property type="protein sequence ID" value="AAU21089.1"/>
    <property type="molecule type" value="Genomic_DNA"/>
</dbReference>
<dbReference type="EMBL" id="AY677156">
    <property type="protein sequence ID" value="AAV28584.1"/>
    <property type="molecule type" value="Genomic_DNA"/>
</dbReference>
<dbReference type="RefSeq" id="XP_003820581.1">
    <property type="nucleotide sequence ID" value="XM_003820533.1"/>
</dbReference>
<dbReference type="SMR" id="Q646D0"/>
<dbReference type="STRING" id="9597.ENSPPAP00000001675"/>
<dbReference type="GlyCosmos" id="Q646D0">
    <property type="glycosylation" value="1 site, No reported glycans"/>
</dbReference>
<dbReference type="Ensembl" id="ENSPPAT00000008229.1">
    <property type="protein sequence ID" value="ENSPPAP00000001675.1"/>
    <property type="gene ID" value="ENSPPAG00000007626.1"/>
</dbReference>
<dbReference type="GeneID" id="100981779"/>
<dbReference type="KEGG" id="pps:100981779"/>
<dbReference type="CTD" id="338398"/>
<dbReference type="eggNOG" id="ENOG502S2SI">
    <property type="taxonomic scope" value="Eukaryota"/>
</dbReference>
<dbReference type="GeneTree" id="ENSGT01100000263477"/>
<dbReference type="OMA" id="CLQWVVI"/>
<dbReference type="Proteomes" id="UP000240080">
    <property type="component" value="Chromosome 7"/>
</dbReference>
<dbReference type="GO" id="GO:0005886">
    <property type="term" value="C:plasma membrane"/>
    <property type="evidence" value="ECO:0007669"/>
    <property type="project" value="UniProtKB-ARBA"/>
</dbReference>
<dbReference type="GO" id="GO:0033038">
    <property type="term" value="F:bitter taste receptor activity"/>
    <property type="evidence" value="ECO:0007669"/>
    <property type="project" value="InterPro"/>
</dbReference>
<dbReference type="GO" id="GO:0004930">
    <property type="term" value="F:G protein-coupled receptor activity"/>
    <property type="evidence" value="ECO:0007669"/>
    <property type="project" value="UniProtKB-KW"/>
</dbReference>
<dbReference type="CDD" id="cd15018">
    <property type="entry name" value="7tm_TAS2R41-like"/>
    <property type="match status" value="1"/>
</dbReference>
<dbReference type="FunFam" id="1.20.1070.10:FF:000055">
    <property type="entry name" value="Taste receptor type 2"/>
    <property type="match status" value="1"/>
</dbReference>
<dbReference type="Gene3D" id="1.20.1070.10">
    <property type="entry name" value="Rhodopsin 7-helix transmembrane proteins"/>
    <property type="match status" value="1"/>
</dbReference>
<dbReference type="InterPro" id="IPR007960">
    <property type="entry name" value="TAS2R"/>
</dbReference>
<dbReference type="PANTHER" id="PTHR11394">
    <property type="entry name" value="TASTE RECEPTOR TYPE 2"/>
    <property type="match status" value="1"/>
</dbReference>
<dbReference type="PANTHER" id="PTHR11394:SF32">
    <property type="entry name" value="TASTE RECEPTOR TYPE 2 MEMBER 60"/>
    <property type="match status" value="1"/>
</dbReference>
<dbReference type="Pfam" id="PF05296">
    <property type="entry name" value="TAS2R"/>
    <property type="match status" value="1"/>
</dbReference>
<dbReference type="SUPFAM" id="SSF81321">
    <property type="entry name" value="Family A G protein-coupled receptor-like"/>
    <property type="match status" value="1"/>
</dbReference>
<proteinExistence type="inferred from homology"/>
<name>T2R60_PANPA</name>
<evidence type="ECO:0000250" key="1"/>
<evidence type="ECO:0000255" key="2"/>
<evidence type="ECO:0000305" key="3"/>
<protein>
    <recommendedName>
        <fullName>Taste receptor type 2 member 60</fullName>
        <shortName>T2R60</shortName>
    </recommendedName>
    <alternativeName>
        <fullName>T2R56</fullName>
    </alternativeName>
</protein>
<accession>Q646D0</accession>
<accession>Q5Y4Z1</accession>